<proteinExistence type="inferred from homology"/>
<gene>
    <name evidence="1" type="primary">lpxC</name>
    <name type="ordered locus">NMA0263</name>
</gene>
<accession>Q9JWS2</accession>
<accession>A1IPA9</accession>
<sequence>MLQRTLAKSISVTGVGLHSGERVALTLHPAPENSGISFRRTDLDGEMGEQIKLTPYLINDTRLSSTIVTDKGVRVGTIEHIMSALSAYGIDNALIELNAPEIPIMDGSSLPFIYLLQDAGVVDQKAQKRFLKILKPVEIKEAGKWVRFTPYDGFKVTLTIEFDHPVFNRSSPTFEIDFAGKSYIDEIARARTFGFMHEVEMMRAHNLGLGGNLNNAIVIDDTDVLNPEGLRYPDEFVRHKILDAIGDLYIVGHPIIGAFEGYKSGHAINNALLRAVLADETAYDRVEFADSDDLPDAFHELNIRTCG</sequence>
<feature type="chain" id="PRO_0000191940" description="UDP-3-O-acyl-N-acetylglucosamine deacetylase">
    <location>
        <begin position="1"/>
        <end position="307"/>
    </location>
</feature>
<feature type="active site" description="Proton donor" evidence="1">
    <location>
        <position position="266"/>
    </location>
</feature>
<feature type="binding site" evidence="1">
    <location>
        <position position="80"/>
    </location>
    <ligand>
        <name>Zn(2+)</name>
        <dbReference type="ChEBI" id="CHEBI:29105"/>
    </ligand>
</feature>
<feature type="binding site" evidence="1">
    <location>
        <position position="239"/>
    </location>
    <ligand>
        <name>Zn(2+)</name>
        <dbReference type="ChEBI" id="CHEBI:29105"/>
    </ligand>
</feature>
<feature type="binding site" evidence="1">
    <location>
        <position position="243"/>
    </location>
    <ligand>
        <name>Zn(2+)</name>
        <dbReference type="ChEBI" id="CHEBI:29105"/>
    </ligand>
</feature>
<comment type="function">
    <text evidence="1">Catalyzes the hydrolysis of UDP-3-O-myristoyl-N-acetylglucosamine to form UDP-3-O-myristoylglucosamine and acetate, the committed step in lipid A biosynthesis.</text>
</comment>
<comment type="catalytic activity">
    <reaction evidence="1">
        <text>a UDP-3-O-[(3R)-3-hydroxyacyl]-N-acetyl-alpha-D-glucosamine + H2O = a UDP-3-O-[(3R)-3-hydroxyacyl]-alpha-D-glucosamine + acetate</text>
        <dbReference type="Rhea" id="RHEA:67816"/>
        <dbReference type="ChEBI" id="CHEBI:15377"/>
        <dbReference type="ChEBI" id="CHEBI:30089"/>
        <dbReference type="ChEBI" id="CHEBI:137740"/>
        <dbReference type="ChEBI" id="CHEBI:173225"/>
        <dbReference type="EC" id="3.5.1.108"/>
    </reaction>
</comment>
<comment type="cofactor">
    <cofactor evidence="1">
        <name>Zn(2+)</name>
        <dbReference type="ChEBI" id="CHEBI:29105"/>
    </cofactor>
</comment>
<comment type="pathway">
    <text evidence="1">Glycolipid biosynthesis; lipid IV(A) biosynthesis; lipid IV(A) from (3R)-3-hydroxytetradecanoyl-[acyl-carrier-protein] and UDP-N-acetyl-alpha-D-glucosamine: step 2/6.</text>
</comment>
<comment type="similarity">
    <text evidence="1">Belongs to the LpxC family.</text>
</comment>
<protein>
    <recommendedName>
        <fullName evidence="1">UDP-3-O-acyl-N-acetylglucosamine deacetylase</fullName>
        <shortName evidence="1">UDP-3-O-acyl-GlcNAc deacetylase</shortName>
        <ecNumber evidence="1">3.5.1.108</ecNumber>
    </recommendedName>
    <alternativeName>
        <fullName evidence="1">UDP-3-O-[R-3-hydroxymyristoyl]-N-acetylglucosamine deacetylase</fullName>
    </alternativeName>
</protein>
<dbReference type="EC" id="3.5.1.108" evidence="1"/>
<dbReference type="EMBL" id="AL157959">
    <property type="protein sequence ID" value="CAM07569.1"/>
    <property type="molecule type" value="Genomic_DNA"/>
</dbReference>
<dbReference type="PIR" id="C82021">
    <property type="entry name" value="C82021"/>
</dbReference>
<dbReference type="RefSeq" id="WP_002246555.1">
    <property type="nucleotide sequence ID" value="NC_003116.1"/>
</dbReference>
<dbReference type="SMR" id="Q9JWS2"/>
<dbReference type="EnsemblBacteria" id="CAM07569">
    <property type="protein sequence ID" value="CAM07569"/>
    <property type="gene ID" value="NMA0263"/>
</dbReference>
<dbReference type="GeneID" id="93387085"/>
<dbReference type="KEGG" id="nma:NMA0263"/>
<dbReference type="HOGENOM" id="CLU_046528_1_0_4"/>
<dbReference type="UniPathway" id="UPA00359">
    <property type="reaction ID" value="UER00478"/>
</dbReference>
<dbReference type="Proteomes" id="UP000000626">
    <property type="component" value="Chromosome"/>
</dbReference>
<dbReference type="GO" id="GO:0016020">
    <property type="term" value="C:membrane"/>
    <property type="evidence" value="ECO:0007669"/>
    <property type="project" value="GOC"/>
</dbReference>
<dbReference type="GO" id="GO:0046872">
    <property type="term" value="F:metal ion binding"/>
    <property type="evidence" value="ECO:0007669"/>
    <property type="project" value="UniProtKB-KW"/>
</dbReference>
<dbReference type="GO" id="GO:0103117">
    <property type="term" value="F:UDP-3-O-acyl-N-acetylglucosamine deacetylase activity"/>
    <property type="evidence" value="ECO:0007669"/>
    <property type="project" value="UniProtKB-UniRule"/>
</dbReference>
<dbReference type="GO" id="GO:0009245">
    <property type="term" value="P:lipid A biosynthetic process"/>
    <property type="evidence" value="ECO:0007669"/>
    <property type="project" value="UniProtKB-UniRule"/>
</dbReference>
<dbReference type="Gene3D" id="3.30.230.20">
    <property type="entry name" value="lpxc deacetylase, domain 1"/>
    <property type="match status" value="1"/>
</dbReference>
<dbReference type="Gene3D" id="3.30.1700.10">
    <property type="entry name" value="lpxc deacetylase, domain 2"/>
    <property type="match status" value="1"/>
</dbReference>
<dbReference type="HAMAP" id="MF_00388">
    <property type="entry name" value="LpxC"/>
    <property type="match status" value="1"/>
</dbReference>
<dbReference type="InterPro" id="IPR020568">
    <property type="entry name" value="Ribosomal_Su5_D2-typ_SF"/>
</dbReference>
<dbReference type="InterPro" id="IPR004463">
    <property type="entry name" value="UDP-acyl_GlcNac_deAcase"/>
</dbReference>
<dbReference type="InterPro" id="IPR011334">
    <property type="entry name" value="UDP-acyl_GlcNac_deAcase_C"/>
</dbReference>
<dbReference type="InterPro" id="IPR015870">
    <property type="entry name" value="UDP-acyl_N-AcGlcN_deAcase_N"/>
</dbReference>
<dbReference type="NCBIfam" id="TIGR00325">
    <property type="entry name" value="lpxC"/>
    <property type="match status" value="1"/>
</dbReference>
<dbReference type="PANTHER" id="PTHR33694">
    <property type="entry name" value="UDP-3-O-ACYL-N-ACETYLGLUCOSAMINE DEACETYLASE 1, MITOCHONDRIAL-RELATED"/>
    <property type="match status" value="1"/>
</dbReference>
<dbReference type="PANTHER" id="PTHR33694:SF1">
    <property type="entry name" value="UDP-3-O-ACYL-N-ACETYLGLUCOSAMINE DEACETYLASE 1, MITOCHONDRIAL-RELATED"/>
    <property type="match status" value="1"/>
</dbReference>
<dbReference type="Pfam" id="PF03331">
    <property type="entry name" value="LpxC"/>
    <property type="match status" value="1"/>
</dbReference>
<dbReference type="SUPFAM" id="SSF54211">
    <property type="entry name" value="Ribosomal protein S5 domain 2-like"/>
    <property type="match status" value="2"/>
</dbReference>
<keyword id="KW-0378">Hydrolase</keyword>
<keyword id="KW-0441">Lipid A biosynthesis</keyword>
<keyword id="KW-0444">Lipid biosynthesis</keyword>
<keyword id="KW-0443">Lipid metabolism</keyword>
<keyword id="KW-0479">Metal-binding</keyword>
<keyword id="KW-0862">Zinc</keyword>
<reference key="1">
    <citation type="journal article" date="2000" name="Nature">
        <title>Complete DNA sequence of a serogroup A strain of Neisseria meningitidis Z2491.</title>
        <authorList>
            <person name="Parkhill J."/>
            <person name="Achtman M."/>
            <person name="James K.D."/>
            <person name="Bentley S.D."/>
            <person name="Churcher C.M."/>
            <person name="Klee S.R."/>
            <person name="Morelli G."/>
            <person name="Basham D."/>
            <person name="Brown D."/>
            <person name="Chillingworth T."/>
            <person name="Davies R.M."/>
            <person name="Davis P."/>
            <person name="Devlin K."/>
            <person name="Feltwell T."/>
            <person name="Hamlin N."/>
            <person name="Holroyd S."/>
            <person name="Jagels K."/>
            <person name="Leather S."/>
            <person name="Moule S."/>
            <person name="Mungall K.L."/>
            <person name="Quail M.A."/>
            <person name="Rajandream M.A."/>
            <person name="Rutherford K.M."/>
            <person name="Simmonds M."/>
            <person name="Skelton J."/>
            <person name="Whitehead S."/>
            <person name="Spratt B.G."/>
            <person name="Barrell B.G."/>
        </authorList>
    </citation>
    <scope>NUCLEOTIDE SEQUENCE [LARGE SCALE GENOMIC DNA]</scope>
    <source>
        <strain>DSM 15465 / Z2491</strain>
    </source>
</reference>
<organism>
    <name type="scientific">Neisseria meningitidis serogroup A / serotype 4A (strain DSM 15465 / Z2491)</name>
    <dbReference type="NCBI Taxonomy" id="122587"/>
    <lineage>
        <taxon>Bacteria</taxon>
        <taxon>Pseudomonadati</taxon>
        <taxon>Pseudomonadota</taxon>
        <taxon>Betaproteobacteria</taxon>
        <taxon>Neisseriales</taxon>
        <taxon>Neisseriaceae</taxon>
        <taxon>Neisseria</taxon>
    </lineage>
</organism>
<name>LPXC_NEIMA</name>
<evidence type="ECO:0000255" key="1">
    <source>
        <dbReference type="HAMAP-Rule" id="MF_00388"/>
    </source>
</evidence>